<organism>
    <name type="scientific">Haemophilus influenzae (strain PittGG)</name>
    <dbReference type="NCBI Taxonomy" id="374931"/>
    <lineage>
        <taxon>Bacteria</taxon>
        <taxon>Pseudomonadati</taxon>
        <taxon>Pseudomonadota</taxon>
        <taxon>Gammaproteobacteria</taxon>
        <taxon>Pasteurellales</taxon>
        <taxon>Pasteurellaceae</taxon>
        <taxon>Haemophilus</taxon>
    </lineage>
</organism>
<protein>
    <recommendedName>
        <fullName evidence="1">UDP-N-acetylmuramoyl-L-alanyl-D-glutamate--2,6-diaminopimelate ligase</fullName>
        <ecNumber evidence="1">6.3.2.13</ecNumber>
    </recommendedName>
    <alternativeName>
        <fullName evidence="1">Meso-A2pm-adding enzyme</fullName>
    </alternativeName>
    <alternativeName>
        <fullName evidence="1">Meso-diaminopimelate-adding enzyme</fullName>
    </alternativeName>
    <alternativeName>
        <fullName evidence="1">UDP-MurNAc-L-Ala-D-Glu:meso-diaminopimelate ligase</fullName>
    </alternativeName>
    <alternativeName>
        <fullName evidence="1">UDP-MurNAc-tripeptide synthetase</fullName>
    </alternativeName>
    <alternativeName>
        <fullName evidence="1">UDP-N-acetylmuramyl-tripeptide synthetase</fullName>
    </alternativeName>
</protein>
<feature type="chain" id="PRO_1000012358" description="UDP-N-acetylmuramoyl-L-alanyl-D-glutamate--2,6-diaminopimelate ligase">
    <location>
        <begin position="1"/>
        <end position="488"/>
    </location>
</feature>
<feature type="short sequence motif" description="Meso-diaminopimelate recognition motif">
    <location>
        <begin position="410"/>
        <end position="413"/>
    </location>
</feature>
<feature type="binding site" evidence="1">
    <location>
        <position position="24"/>
    </location>
    <ligand>
        <name>UDP-N-acetyl-alpha-D-muramoyl-L-alanyl-D-glutamate</name>
        <dbReference type="ChEBI" id="CHEBI:83900"/>
    </ligand>
</feature>
<feature type="binding site" evidence="1">
    <location>
        <position position="26"/>
    </location>
    <ligand>
        <name>UDP-N-acetyl-alpha-D-muramoyl-L-alanyl-D-glutamate</name>
        <dbReference type="ChEBI" id="CHEBI:83900"/>
    </ligand>
</feature>
<feature type="binding site" evidence="1">
    <location>
        <begin position="41"/>
        <end position="43"/>
    </location>
    <ligand>
        <name>UDP-N-acetyl-alpha-D-muramoyl-L-alanyl-D-glutamate</name>
        <dbReference type="ChEBI" id="CHEBI:83900"/>
    </ligand>
</feature>
<feature type="binding site" evidence="1">
    <location>
        <begin position="113"/>
        <end position="119"/>
    </location>
    <ligand>
        <name>ATP</name>
        <dbReference type="ChEBI" id="CHEBI:30616"/>
    </ligand>
</feature>
<feature type="binding site" evidence="1">
    <location>
        <position position="154"/>
    </location>
    <ligand>
        <name>UDP-N-acetyl-alpha-D-muramoyl-L-alanyl-D-glutamate</name>
        <dbReference type="ChEBI" id="CHEBI:83900"/>
    </ligand>
</feature>
<feature type="binding site" evidence="1">
    <location>
        <begin position="155"/>
        <end position="156"/>
    </location>
    <ligand>
        <name>UDP-N-acetyl-alpha-D-muramoyl-L-alanyl-D-glutamate</name>
        <dbReference type="ChEBI" id="CHEBI:83900"/>
    </ligand>
</feature>
<feature type="binding site" evidence="1">
    <location>
        <position position="182"/>
    </location>
    <ligand>
        <name>UDP-N-acetyl-alpha-D-muramoyl-L-alanyl-D-glutamate</name>
        <dbReference type="ChEBI" id="CHEBI:83900"/>
    </ligand>
</feature>
<feature type="binding site" evidence="1">
    <location>
        <position position="188"/>
    </location>
    <ligand>
        <name>UDP-N-acetyl-alpha-D-muramoyl-L-alanyl-D-glutamate</name>
        <dbReference type="ChEBI" id="CHEBI:83900"/>
    </ligand>
</feature>
<feature type="binding site" evidence="1">
    <location>
        <position position="190"/>
    </location>
    <ligand>
        <name>UDP-N-acetyl-alpha-D-muramoyl-L-alanyl-D-glutamate</name>
        <dbReference type="ChEBI" id="CHEBI:83900"/>
    </ligand>
</feature>
<feature type="binding site" evidence="1">
    <location>
        <position position="386"/>
    </location>
    <ligand>
        <name>meso-2,6-diaminopimelate</name>
        <dbReference type="ChEBI" id="CHEBI:57791"/>
    </ligand>
</feature>
<feature type="binding site" evidence="1">
    <location>
        <begin position="410"/>
        <end position="413"/>
    </location>
    <ligand>
        <name>meso-2,6-diaminopimelate</name>
        <dbReference type="ChEBI" id="CHEBI:57791"/>
    </ligand>
</feature>
<feature type="binding site" evidence="1">
    <location>
        <position position="461"/>
    </location>
    <ligand>
        <name>meso-2,6-diaminopimelate</name>
        <dbReference type="ChEBI" id="CHEBI:57791"/>
    </ligand>
</feature>
<feature type="binding site" evidence="1">
    <location>
        <position position="465"/>
    </location>
    <ligand>
        <name>meso-2,6-diaminopimelate</name>
        <dbReference type="ChEBI" id="CHEBI:57791"/>
    </ligand>
</feature>
<feature type="modified residue" description="N6-carboxylysine" evidence="1">
    <location>
        <position position="222"/>
    </location>
</feature>
<keyword id="KW-0067">ATP-binding</keyword>
<keyword id="KW-0131">Cell cycle</keyword>
<keyword id="KW-0132">Cell division</keyword>
<keyword id="KW-0133">Cell shape</keyword>
<keyword id="KW-0961">Cell wall biogenesis/degradation</keyword>
<keyword id="KW-0963">Cytoplasm</keyword>
<keyword id="KW-0436">Ligase</keyword>
<keyword id="KW-0460">Magnesium</keyword>
<keyword id="KW-0547">Nucleotide-binding</keyword>
<keyword id="KW-0573">Peptidoglycan synthesis</keyword>
<evidence type="ECO:0000255" key="1">
    <source>
        <dbReference type="HAMAP-Rule" id="MF_00208"/>
    </source>
</evidence>
<gene>
    <name evidence="1" type="primary">murE</name>
    <name type="ordered locus">CGSHiGG_09325</name>
</gene>
<dbReference type="EC" id="6.3.2.13" evidence="1"/>
<dbReference type="EMBL" id="CP000672">
    <property type="protein sequence ID" value="ABR00663.1"/>
    <property type="molecule type" value="Genomic_DNA"/>
</dbReference>
<dbReference type="SMR" id="A5UIQ7"/>
<dbReference type="KEGG" id="hiq:CGSHiGG_09325"/>
<dbReference type="HOGENOM" id="CLU_022291_3_2_6"/>
<dbReference type="UniPathway" id="UPA00219"/>
<dbReference type="Proteomes" id="UP000001990">
    <property type="component" value="Chromosome"/>
</dbReference>
<dbReference type="GO" id="GO:0005737">
    <property type="term" value="C:cytoplasm"/>
    <property type="evidence" value="ECO:0007669"/>
    <property type="project" value="UniProtKB-SubCell"/>
</dbReference>
<dbReference type="GO" id="GO:0005524">
    <property type="term" value="F:ATP binding"/>
    <property type="evidence" value="ECO:0007669"/>
    <property type="project" value="UniProtKB-UniRule"/>
</dbReference>
<dbReference type="GO" id="GO:0000287">
    <property type="term" value="F:magnesium ion binding"/>
    <property type="evidence" value="ECO:0007669"/>
    <property type="project" value="UniProtKB-UniRule"/>
</dbReference>
<dbReference type="GO" id="GO:0008765">
    <property type="term" value="F:UDP-N-acetylmuramoylalanyl-D-glutamate-2,6-diaminopimelate ligase activity"/>
    <property type="evidence" value="ECO:0007669"/>
    <property type="project" value="UniProtKB-UniRule"/>
</dbReference>
<dbReference type="GO" id="GO:0051301">
    <property type="term" value="P:cell division"/>
    <property type="evidence" value="ECO:0007669"/>
    <property type="project" value="UniProtKB-KW"/>
</dbReference>
<dbReference type="GO" id="GO:0071555">
    <property type="term" value="P:cell wall organization"/>
    <property type="evidence" value="ECO:0007669"/>
    <property type="project" value="UniProtKB-KW"/>
</dbReference>
<dbReference type="GO" id="GO:0009252">
    <property type="term" value="P:peptidoglycan biosynthetic process"/>
    <property type="evidence" value="ECO:0007669"/>
    <property type="project" value="UniProtKB-UniRule"/>
</dbReference>
<dbReference type="GO" id="GO:0008360">
    <property type="term" value="P:regulation of cell shape"/>
    <property type="evidence" value="ECO:0007669"/>
    <property type="project" value="UniProtKB-KW"/>
</dbReference>
<dbReference type="FunFam" id="3.90.190.20:FF:000006">
    <property type="entry name" value="UDP-N-acetylmuramoyl-L-alanyl-D-glutamate--2,6-diaminopimelate ligase"/>
    <property type="match status" value="1"/>
</dbReference>
<dbReference type="Gene3D" id="3.90.190.20">
    <property type="entry name" value="Mur ligase, C-terminal domain"/>
    <property type="match status" value="1"/>
</dbReference>
<dbReference type="Gene3D" id="3.40.1190.10">
    <property type="entry name" value="Mur-like, catalytic domain"/>
    <property type="match status" value="1"/>
</dbReference>
<dbReference type="Gene3D" id="3.40.1390.10">
    <property type="entry name" value="MurE/MurF, N-terminal domain"/>
    <property type="match status" value="1"/>
</dbReference>
<dbReference type="HAMAP" id="MF_00208">
    <property type="entry name" value="MurE"/>
    <property type="match status" value="1"/>
</dbReference>
<dbReference type="InterPro" id="IPR036565">
    <property type="entry name" value="Mur-like_cat_sf"/>
</dbReference>
<dbReference type="InterPro" id="IPR004101">
    <property type="entry name" value="Mur_ligase_C"/>
</dbReference>
<dbReference type="InterPro" id="IPR036615">
    <property type="entry name" value="Mur_ligase_C_dom_sf"/>
</dbReference>
<dbReference type="InterPro" id="IPR013221">
    <property type="entry name" value="Mur_ligase_cen"/>
</dbReference>
<dbReference type="InterPro" id="IPR000713">
    <property type="entry name" value="Mur_ligase_N"/>
</dbReference>
<dbReference type="InterPro" id="IPR035911">
    <property type="entry name" value="MurE/MurF_N"/>
</dbReference>
<dbReference type="InterPro" id="IPR005761">
    <property type="entry name" value="UDP-N-AcMur-Glu-dNH2Pim_ligase"/>
</dbReference>
<dbReference type="NCBIfam" id="TIGR01085">
    <property type="entry name" value="murE"/>
    <property type="match status" value="1"/>
</dbReference>
<dbReference type="NCBIfam" id="NF001123">
    <property type="entry name" value="PRK00139.1-1"/>
    <property type="match status" value="1"/>
</dbReference>
<dbReference type="NCBIfam" id="NF001124">
    <property type="entry name" value="PRK00139.1-2"/>
    <property type="match status" value="1"/>
</dbReference>
<dbReference type="NCBIfam" id="NF001126">
    <property type="entry name" value="PRK00139.1-4"/>
    <property type="match status" value="1"/>
</dbReference>
<dbReference type="PANTHER" id="PTHR23135">
    <property type="entry name" value="MUR LIGASE FAMILY MEMBER"/>
    <property type="match status" value="1"/>
</dbReference>
<dbReference type="PANTHER" id="PTHR23135:SF4">
    <property type="entry name" value="UDP-N-ACETYLMURAMOYL-L-ALANYL-D-GLUTAMATE--2,6-DIAMINOPIMELATE LIGASE MURE HOMOLOG, CHLOROPLASTIC"/>
    <property type="match status" value="1"/>
</dbReference>
<dbReference type="Pfam" id="PF01225">
    <property type="entry name" value="Mur_ligase"/>
    <property type="match status" value="1"/>
</dbReference>
<dbReference type="Pfam" id="PF02875">
    <property type="entry name" value="Mur_ligase_C"/>
    <property type="match status" value="1"/>
</dbReference>
<dbReference type="Pfam" id="PF08245">
    <property type="entry name" value="Mur_ligase_M"/>
    <property type="match status" value="1"/>
</dbReference>
<dbReference type="SUPFAM" id="SSF53623">
    <property type="entry name" value="MurD-like peptide ligases, catalytic domain"/>
    <property type="match status" value="1"/>
</dbReference>
<dbReference type="SUPFAM" id="SSF53244">
    <property type="entry name" value="MurD-like peptide ligases, peptide-binding domain"/>
    <property type="match status" value="1"/>
</dbReference>
<dbReference type="SUPFAM" id="SSF63418">
    <property type="entry name" value="MurE/MurF N-terminal domain"/>
    <property type="match status" value="1"/>
</dbReference>
<accession>A5UIQ7</accession>
<name>MURE_HAEIG</name>
<sequence length="488" mass="53711">MKKLTALFNLPELKNDIELHNMVLDSRKVKAGDLFVAIKGHQVDGNQFIDSALHSGASAVVSETELSSEHLTVEFIGNVPVVKYHQLARHLSSLADVFYDSPSKNLTLVGVTGTNGKTTISQLLAQWAELLGHRAAVMGTIGNGLFRQIVEAKNTTGSAVEIQSSLSTFKHAGADFTSIEVSSHGLAQHRVEALHFKAAIFTNLTRDHLDYHQSMENYAAAKKRLFTELDTQIKVINADDEIGYQWLTELPDAIAVSMNADFKVGSHQWMKAINIHYHFKGADITFESSWGNGVLHSPLIGAFNVSNLLLVMTTLLSFGYPLENLLATAKSLKGVCGRMEMIQYPNKPTVIVDYAHTPDALEKALIAAREHCQGELWCIFGCGGDRDRGKRPLMAQIAEQFAEKIIVTKDNPRTEPQSQIEADIVAGFKNMEKVGIIPDRAQAIQFAIESAVENDVILIAGKGHEHYQIIGSEVVHFSDQEIALDFLK</sequence>
<proteinExistence type="inferred from homology"/>
<comment type="function">
    <text evidence="1">Catalyzes the addition of meso-diaminopimelic acid to the nucleotide precursor UDP-N-acetylmuramoyl-L-alanyl-D-glutamate (UMAG) in the biosynthesis of bacterial cell-wall peptidoglycan.</text>
</comment>
<comment type="catalytic activity">
    <reaction evidence="1">
        <text>UDP-N-acetyl-alpha-D-muramoyl-L-alanyl-D-glutamate + meso-2,6-diaminopimelate + ATP = UDP-N-acetyl-alpha-D-muramoyl-L-alanyl-gamma-D-glutamyl-meso-2,6-diaminopimelate + ADP + phosphate + H(+)</text>
        <dbReference type="Rhea" id="RHEA:23676"/>
        <dbReference type="ChEBI" id="CHEBI:15378"/>
        <dbReference type="ChEBI" id="CHEBI:30616"/>
        <dbReference type="ChEBI" id="CHEBI:43474"/>
        <dbReference type="ChEBI" id="CHEBI:57791"/>
        <dbReference type="ChEBI" id="CHEBI:83900"/>
        <dbReference type="ChEBI" id="CHEBI:83905"/>
        <dbReference type="ChEBI" id="CHEBI:456216"/>
        <dbReference type="EC" id="6.3.2.13"/>
    </reaction>
</comment>
<comment type="cofactor">
    <cofactor evidence="1">
        <name>Mg(2+)</name>
        <dbReference type="ChEBI" id="CHEBI:18420"/>
    </cofactor>
</comment>
<comment type="pathway">
    <text evidence="1">Cell wall biogenesis; peptidoglycan biosynthesis.</text>
</comment>
<comment type="subcellular location">
    <subcellularLocation>
        <location evidence="1">Cytoplasm</location>
    </subcellularLocation>
</comment>
<comment type="PTM">
    <text evidence="1">Carboxylation is probably crucial for Mg(2+) binding and, consequently, for the gamma-phosphate positioning of ATP.</text>
</comment>
<comment type="similarity">
    <text evidence="1">Belongs to the MurCDEF family. MurE subfamily.</text>
</comment>
<reference key="1">
    <citation type="journal article" date="2007" name="Genome Biol.">
        <title>Characterization and modeling of the Haemophilus influenzae core and supragenomes based on the complete genomic sequences of Rd and 12 clinical nontypeable strains.</title>
        <authorList>
            <person name="Hogg J.S."/>
            <person name="Hu F.Z."/>
            <person name="Janto B."/>
            <person name="Boissy R."/>
            <person name="Hayes J."/>
            <person name="Keefe R."/>
            <person name="Post J.C."/>
            <person name="Ehrlich G.D."/>
        </authorList>
    </citation>
    <scope>NUCLEOTIDE SEQUENCE [LARGE SCALE GENOMIC DNA]</scope>
    <source>
        <strain>PittGG</strain>
    </source>
</reference>